<proteinExistence type="evidence at protein level"/>
<feature type="peptide" id="PRO_0000421549" description="Extended FMRFamide-10" evidence="3">
    <location>
        <begin position="1"/>
        <end position="11"/>
    </location>
</feature>
<feature type="unsure residue" description="L or I" evidence="3">
    <location>
        <position position="8"/>
    </location>
</feature>
<dbReference type="GO" id="GO:0005576">
    <property type="term" value="C:extracellular region"/>
    <property type="evidence" value="ECO:0007669"/>
    <property type="project" value="UniProtKB-SubCell"/>
</dbReference>
<dbReference type="GO" id="GO:0007218">
    <property type="term" value="P:neuropeptide signaling pathway"/>
    <property type="evidence" value="ECO:0007669"/>
    <property type="project" value="UniProtKB-KW"/>
</dbReference>
<organism>
    <name type="scientific">Hemilobophasma montaguense</name>
    <name type="common">Gladiator</name>
    <name type="synonym">Heel-walker</name>
    <dbReference type="NCBI Taxonomy" id="253130"/>
    <lineage>
        <taxon>Eukaryota</taxon>
        <taxon>Metazoa</taxon>
        <taxon>Ecdysozoa</taxon>
        <taxon>Arthropoda</taxon>
        <taxon>Hexapoda</taxon>
        <taxon>Insecta</taxon>
        <taxon>Pterygota</taxon>
        <taxon>Neoptera</taxon>
        <taxon>Polyneoptera</taxon>
        <taxon>Mantophasmatodea</taxon>
        <taxon>Austrophasmatidae</taxon>
        <taxon>Hemilobophasma</taxon>
    </lineage>
</organism>
<accession>B3A0C8</accession>
<reference evidence="5" key="1">
    <citation type="journal article" date="2012" name="Syst. Biol.">
        <title>Peptidomics-based phylogeny and biogeography of Mantophasmatodea (Hexapoda).</title>
        <authorList>
            <person name="Predel R."/>
            <person name="Neupert S."/>
            <person name="Huetteroth W."/>
            <person name="Kahnt J."/>
            <person name="Waidelich D."/>
            <person name="Roth S."/>
        </authorList>
    </citation>
    <scope>PROTEIN SEQUENCE</scope>
    <source>
        <tissue evidence="3">Thoracic perisympathetic organs</tissue>
    </source>
</reference>
<evidence type="ECO:0000250" key="1">
    <source>
        <dbReference type="UniProtKB" id="P34405"/>
    </source>
</evidence>
<evidence type="ECO:0000255" key="2"/>
<evidence type="ECO:0000269" key="3">
    <source>
    </source>
</evidence>
<evidence type="ECO:0000303" key="4">
    <source>
    </source>
</evidence>
<evidence type="ECO:0000305" key="5"/>
<evidence type="ECO:0000305" key="6">
    <source>
    </source>
</evidence>
<protein>
    <recommendedName>
        <fullName evidence="4">Extended FMRFamide-10</fullName>
        <shortName evidence="4">FMRFa-10</shortName>
    </recommendedName>
</protein>
<keyword id="KW-0903">Direct protein sequencing</keyword>
<keyword id="KW-0527">Neuropeptide</keyword>
<keyword id="KW-0964">Secreted</keyword>
<name>FAR10_HEMMO</name>
<sequence length="11" mass="1201">PAPDSSFLRDP</sequence>
<comment type="function">
    <text evidence="1">FMRFamides and FMRFamide-like peptides are neuropeptides.</text>
</comment>
<comment type="subcellular location">
    <subcellularLocation>
        <location evidence="6">Secreted</location>
    </subcellularLocation>
</comment>
<comment type="similarity">
    <text evidence="2">Belongs to the FARP (FMRF amide related peptide) family.</text>
</comment>